<accession>B2IP45</accession>
<reference key="1">
    <citation type="journal article" date="2009" name="BMC Genomics">
        <title>Genome evolution driven by host adaptations results in a more virulent and antimicrobial-resistant Streptococcus pneumoniae serotype 14.</title>
        <authorList>
            <person name="Ding F."/>
            <person name="Tang P."/>
            <person name="Hsu M.-H."/>
            <person name="Cui P."/>
            <person name="Hu S."/>
            <person name="Yu J."/>
            <person name="Chiu C.-H."/>
        </authorList>
    </citation>
    <scope>NUCLEOTIDE SEQUENCE [LARGE SCALE GENOMIC DNA]</scope>
    <source>
        <strain>CGSP14</strain>
    </source>
</reference>
<gene>
    <name evidence="1" type="primary">atpD</name>
    <name type="ordered locus">SPCG_0864</name>
</gene>
<dbReference type="EMBL" id="CP001033">
    <property type="protein sequence ID" value="ACB90116.1"/>
    <property type="molecule type" value="Genomic_DNA"/>
</dbReference>
<dbReference type="RefSeq" id="WP_000251933.1">
    <property type="nucleotide sequence ID" value="NC_010582.1"/>
</dbReference>
<dbReference type="SMR" id="B2IP45"/>
<dbReference type="KEGG" id="spw:SPCG_0864"/>
<dbReference type="HOGENOM" id="CLU_069688_2_1_9"/>
<dbReference type="GO" id="GO:0005524">
    <property type="term" value="F:ATP binding"/>
    <property type="evidence" value="ECO:0007669"/>
    <property type="project" value="UniProtKB-UniRule"/>
</dbReference>
<dbReference type="GO" id="GO:0046933">
    <property type="term" value="F:proton-transporting ATP synthase activity, rotational mechanism"/>
    <property type="evidence" value="ECO:0007669"/>
    <property type="project" value="UniProtKB-UniRule"/>
</dbReference>
<dbReference type="GO" id="GO:0046961">
    <property type="term" value="F:proton-transporting ATPase activity, rotational mechanism"/>
    <property type="evidence" value="ECO:0007669"/>
    <property type="project" value="InterPro"/>
</dbReference>
<dbReference type="GO" id="GO:0042777">
    <property type="term" value="P:proton motive force-driven plasma membrane ATP synthesis"/>
    <property type="evidence" value="ECO:0007669"/>
    <property type="project" value="UniProtKB-UniRule"/>
</dbReference>
<dbReference type="Gene3D" id="1.10.287.3240">
    <property type="match status" value="1"/>
</dbReference>
<dbReference type="HAMAP" id="MF_00271">
    <property type="entry name" value="ATP_synth_D_arch"/>
    <property type="match status" value="1"/>
</dbReference>
<dbReference type="InterPro" id="IPR002699">
    <property type="entry name" value="V_ATPase_D"/>
</dbReference>
<dbReference type="NCBIfam" id="NF001546">
    <property type="entry name" value="PRK00373.1-5"/>
    <property type="match status" value="1"/>
</dbReference>
<dbReference type="NCBIfam" id="TIGR00309">
    <property type="entry name" value="V_ATPase_subD"/>
    <property type="match status" value="1"/>
</dbReference>
<dbReference type="PANTHER" id="PTHR11671">
    <property type="entry name" value="V-TYPE ATP SYNTHASE SUBUNIT D"/>
    <property type="match status" value="1"/>
</dbReference>
<dbReference type="Pfam" id="PF01813">
    <property type="entry name" value="ATP-synt_D"/>
    <property type="match status" value="1"/>
</dbReference>
<evidence type="ECO:0000255" key="1">
    <source>
        <dbReference type="HAMAP-Rule" id="MF_00271"/>
    </source>
</evidence>
<name>VATD_STRPS</name>
<comment type="function">
    <text evidence="1">Produces ATP from ADP in the presence of a proton gradient across the membrane.</text>
</comment>
<comment type="similarity">
    <text evidence="1">Belongs to the V-ATPase D subunit family.</text>
</comment>
<protein>
    <recommendedName>
        <fullName evidence="1">V-type ATP synthase subunit D</fullName>
    </recommendedName>
    <alternativeName>
        <fullName evidence="1">V-ATPase subunit D</fullName>
    </alternativeName>
</protein>
<keyword id="KW-0066">ATP synthesis</keyword>
<keyword id="KW-0375">Hydrogen ion transport</keyword>
<keyword id="KW-0406">Ion transport</keyword>
<keyword id="KW-0813">Transport</keyword>
<proteinExistence type="inferred from homology"/>
<organism>
    <name type="scientific">Streptococcus pneumoniae (strain CGSP14)</name>
    <dbReference type="NCBI Taxonomy" id="516950"/>
    <lineage>
        <taxon>Bacteria</taxon>
        <taxon>Bacillati</taxon>
        <taxon>Bacillota</taxon>
        <taxon>Bacilli</taxon>
        <taxon>Lactobacillales</taxon>
        <taxon>Streptococcaceae</taxon>
        <taxon>Streptococcus</taxon>
    </lineage>
</organism>
<feature type="chain" id="PRO_1000114485" description="V-type ATP synthase subunit D">
    <location>
        <begin position="1"/>
        <end position="203"/>
    </location>
</feature>
<sequence>MVRLNVKPTRMELNNLKERLKTAERGHKLLKDKRDELMRRFISLIRENNRLRKEVESYLIDNLKSFAVAKSLKNSLMVEELFSIPSKEIELFIEKENIMSVTVPRMHMNITSQNENSEYSYLSSNSEMDDVFATMNSLIDKLLRLAEVEKTCQLMADEIEKTRRRVNGLEYSIIPNLSETIHYIELKLEEAERANLVRIMKVK</sequence>